<reference key="1">
    <citation type="journal article" date="2009" name="Proc. Natl. Acad. Sci. U.S.A.">
        <title>Biogeography of the Sulfolobus islandicus pan-genome.</title>
        <authorList>
            <person name="Reno M.L."/>
            <person name="Held N.L."/>
            <person name="Fields C.J."/>
            <person name="Burke P.V."/>
            <person name="Whitaker R.J."/>
        </authorList>
    </citation>
    <scope>NUCLEOTIDE SEQUENCE [LARGE SCALE GENOMIC DNA]</scope>
    <source>
        <strain>M.14.25 / Kamchatka #1</strain>
    </source>
</reference>
<protein>
    <recommendedName>
        <fullName evidence="1">8-oxoguanine DNA glycosylase/AP lyase</fullName>
    </recommendedName>
    <domain>
        <recommendedName>
            <fullName evidence="1">8-oxoguanine DNA glycosylase</fullName>
            <shortName evidence="1">8-oxoG DNA glycosylase</shortName>
            <ecNumber evidence="1">3.2.2.-</ecNumber>
        </recommendedName>
    </domain>
    <domain>
        <recommendedName>
            <fullName evidence="1">DNA-(apurinic or apyrimidinic site) lyase</fullName>
            <shortName evidence="1">AP lyase</shortName>
            <ecNumber evidence="1">4.2.99.18</ecNumber>
        </recommendedName>
    </domain>
</protein>
<comment type="function">
    <text evidence="1">Catalyzes the excision of an oxidatively damaged form of guanine (7,8-dihydro-8-oxoguanine = 8-oxoG) from DNA. Also cleaves the DNA backbone at apurinic/apyrimidinic sites (AP sites).</text>
</comment>
<comment type="catalytic activity">
    <reaction evidence="1">
        <text>2'-deoxyribonucleotide-(2'-deoxyribose 5'-phosphate)-2'-deoxyribonucleotide-DNA = a 3'-end 2'-deoxyribonucleotide-(2,3-dehydro-2,3-deoxyribose 5'-phosphate)-DNA + a 5'-end 5'-phospho-2'-deoxyribonucleoside-DNA + H(+)</text>
        <dbReference type="Rhea" id="RHEA:66592"/>
        <dbReference type="Rhea" id="RHEA-COMP:13180"/>
        <dbReference type="Rhea" id="RHEA-COMP:16897"/>
        <dbReference type="Rhea" id="RHEA-COMP:17067"/>
        <dbReference type="ChEBI" id="CHEBI:15378"/>
        <dbReference type="ChEBI" id="CHEBI:136412"/>
        <dbReference type="ChEBI" id="CHEBI:157695"/>
        <dbReference type="ChEBI" id="CHEBI:167181"/>
        <dbReference type="EC" id="4.2.99.18"/>
    </reaction>
</comment>
<comment type="similarity">
    <text evidence="1">Belongs to the type-2 OGG1 family.</text>
</comment>
<gene>
    <name evidence="1" type="primary">ogg</name>
    <name type="ordered locus">M1425_1317</name>
</gene>
<dbReference type="EC" id="3.2.2.-" evidence="1"/>
<dbReference type="EC" id="4.2.99.18" evidence="1"/>
<dbReference type="EMBL" id="CP001400">
    <property type="protein sequence ID" value="ACP38071.1"/>
    <property type="molecule type" value="Genomic_DNA"/>
</dbReference>
<dbReference type="RefSeq" id="WP_012711322.1">
    <property type="nucleotide sequence ID" value="NC_012588.1"/>
</dbReference>
<dbReference type="SMR" id="C3MUW1"/>
<dbReference type="KEGG" id="sia:M1425_1317"/>
<dbReference type="HOGENOM" id="CLU_104937_0_0_2"/>
<dbReference type="Proteomes" id="UP000001350">
    <property type="component" value="Chromosome"/>
</dbReference>
<dbReference type="GO" id="GO:0140078">
    <property type="term" value="F:class I DNA-(apurinic or apyrimidinic site) endonuclease activity"/>
    <property type="evidence" value="ECO:0007669"/>
    <property type="project" value="UniProtKB-EC"/>
</dbReference>
<dbReference type="GO" id="GO:0016799">
    <property type="term" value="F:hydrolase activity, hydrolyzing N-glycosyl compounds"/>
    <property type="evidence" value="ECO:0007669"/>
    <property type="project" value="UniProtKB-UniRule"/>
</dbReference>
<dbReference type="GO" id="GO:0006284">
    <property type="term" value="P:base-excision repair"/>
    <property type="evidence" value="ECO:0007669"/>
    <property type="project" value="UniProtKB-UniRule"/>
</dbReference>
<dbReference type="CDD" id="cd00056">
    <property type="entry name" value="ENDO3c"/>
    <property type="match status" value="1"/>
</dbReference>
<dbReference type="Gene3D" id="1.10.1670.10">
    <property type="entry name" value="Helix-hairpin-Helix base-excision DNA repair enzymes (C-terminal)"/>
    <property type="match status" value="1"/>
</dbReference>
<dbReference type="Gene3D" id="1.10.340.30">
    <property type="entry name" value="Hypothetical protein, domain 2"/>
    <property type="match status" value="1"/>
</dbReference>
<dbReference type="HAMAP" id="MF_00241">
    <property type="entry name" value="Ogg"/>
    <property type="match status" value="1"/>
</dbReference>
<dbReference type="InterPro" id="IPR012092">
    <property type="entry name" value="DNA_glyclase/AP_lyase_Ogg"/>
</dbReference>
<dbReference type="InterPro" id="IPR011257">
    <property type="entry name" value="DNA_glycosylase"/>
</dbReference>
<dbReference type="InterPro" id="IPR003265">
    <property type="entry name" value="HhH-GPD_domain"/>
</dbReference>
<dbReference type="InterPro" id="IPR023170">
    <property type="entry name" value="HhH_base_excis_C"/>
</dbReference>
<dbReference type="NCBIfam" id="NF002305">
    <property type="entry name" value="PRK01229.1"/>
    <property type="match status" value="1"/>
</dbReference>
<dbReference type="Pfam" id="PF22175">
    <property type="entry name" value="Ogg-HhH"/>
    <property type="match status" value="1"/>
</dbReference>
<dbReference type="PIRSF" id="PIRSF005954">
    <property type="entry name" value="Thrmst_ogg"/>
    <property type="match status" value="1"/>
</dbReference>
<dbReference type="SMART" id="SM00478">
    <property type="entry name" value="ENDO3c"/>
    <property type="match status" value="1"/>
</dbReference>
<dbReference type="SUPFAM" id="SSF48150">
    <property type="entry name" value="DNA-glycosylase"/>
    <property type="match status" value="1"/>
</dbReference>
<name>OGG1_SACI4</name>
<feature type="chain" id="PRO_1000204472" description="8-oxoguanine DNA glycosylase/AP lyase">
    <location>
        <begin position="1"/>
        <end position="207"/>
    </location>
</feature>
<feature type="active site" evidence="1">
    <location>
        <position position="128"/>
    </location>
</feature>
<feature type="active site" evidence="1">
    <location>
        <position position="146"/>
    </location>
</feature>
<feature type="site" description="Important for guanine/8-oxoguanine distinction" evidence="1">
    <location>
        <position position="207"/>
    </location>
</feature>
<proteinExistence type="inferred from homology"/>
<keyword id="KW-0227">DNA damage</keyword>
<keyword id="KW-0234">DNA repair</keyword>
<keyword id="KW-0326">Glycosidase</keyword>
<keyword id="KW-0378">Hydrolase</keyword>
<keyword id="KW-0456">Lyase</keyword>
<keyword id="KW-0511">Multifunctional enzyme</keyword>
<sequence length="207" mass="24071">MLRSLVQNPRVRARVLERVDEFRLNNLSNEEVWFRELTLCLLTANSSFISAYQALNCLGDKIYYANEEVIRSILKSCKYRFYNLKAKYIIMAREKVYGKLKEEITPLADSDQQLAREKLLNIKGIGMKEASHFLRNVGYFDLAIIDRHLIDFMRRIGAIGETNVKHLSKSRYISLESVLKSIALNLNISVGILDLFIWYKETNTIVK</sequence>
<organism>
    <name type="scientific">Saccharolobus islandicus (strain M.14.25 / Kamchatka #1)</name>
    <name type="common">Sulfolobus islandicus</name>
    <dbReference type="NCBI Taxonomy" id="427317"/>
    <lineage>
        <taxon>Archaea</taxon>
        <taxon>Thermoproteota</taxon>
        <taxon>Thermoprotei</taxon>
        <taxon>Sulfolobales</taxon>
        <taxon>Sulfolobaceae</taxon>
        <taxon>Saccharolobus</taxon>
    </lineage>
</organism>
<evidence type="ECO:0000255" key="1">
    <source>
        <dbReference type="HAMAP-Rule" id="MF_00241"/>
    </source>
</evidence>
<accession>C3MUW1</accession>